<dbReference type="EMBL" id="CP001083">
    <property type="protein sequence ID" value="ACQ54642.1"/>
    <property type="molecule type" value="Genomic_DNA"/>
</dbReference>
<dbReference type="RefSeq" id="WP_003358895.1">
    <property type="nucleotide sequence ID" value="NC_012658.1"/>
</dbReference>
<dbReference type="SMR" id="C3KXB9"/>
<dbReference type="KEGG" id="cbi:CLJ_B2065"/>
<dbReference type="HOGENOM" id="CLU_097103_3_0_9"/>
<dbReference type="UniPathway" id="UPA00068"/>
<dbReference type="Proteomes" id="UP000002333">
    <property type="component" value="Chromosome"/>
</dbReference>
<dbReference type="GO" id="GO:0005737">
    <property type="term" value="C:cytoplasm"/>
    <property type="evidence" value="ECO:0007669"/>
    <property type="project" value="UniProtKB-SubCell"/>
</dbReference>
<dbReference type="GO" id="GO:0034618">
    <property type="term" value="F:arginine binding"/>
    <property type="evidence" value="ECO:0007669"/>
    <property type="project" value="InterPro"/>
</dbReference>
<dbReference type="GO" id="GO:0003677">
    <property type="term" value="F:DNA binding"/>
    <property type="evidence" value="ECO:0007669"/>
    <property type="project" value="UniProtKB-KW"/>
</dbReference>
<dbReference type="GO" id="GO:0003700">
    <property type="term" value="F:DNA-binding transcription factor activity"/>
    <property type="evidence" value="ECO:0007669"/>
    <property type="project" value="UniProtKB-UniRule"/>
</dbReference>
<dbReference type="GO" id="GO:0006526">
    <property type="term" value="P:L-arginine biosynthetic process"/>
    <property type="evidence" value="ECO:0007669"/>
    <property type="project" value="UniProtKB-UniPathway"/>
</dbReference>
<dbReference type="GO" id="GO:0051259">
    <property type="term" value="P:protein complex oligomerization"/>
    <property type="evidence" value="ECO:0007669"/>
    <property type="project" value="InterPro"/>
</dbReference>
<dbReference type="GO" id="GO:1900079">
    <property type="term" value="P:regulation of arginine biosynthetic process"/>
    <property type="evidence" value="ECO:0007669"/>
    <property type="project" value="UniProtKB-UniRule"/>
</dbReference>
<dbReference type="Gene3D" id="3.30.1360.40">
    <property type="match status" value="1"/>
</dbReference>
<dbReference type="Gene3D" id="1.10.10.10">
    <property type="entry name" value="Winged helix-like DNA-binding domain superfamily/Winged helix DNA-binding domain"/>
    <property type="match status" value="1"/>
</dbReference>
<dbReference type="HAMAP" id="MF_00173">
    <property type="entry name" value="Arg_repressor"/>
    <property type="match status" value="1"/>
</dbReference>
<dbReference type="InterPro" id="IPR001669">
    <property type="entry name" value="Arg_repress"/>
</dbReference>
<dbReference type="InterPro" id="IPR020899">
    <property type="entry name" value="Arg_repress_C"/>
</dbReference>
<dbReference type="InterPro" id="IPR036251">
    <property type="entry name" value="Arg_repress_C_sf"/>
</dbReference>
<dbReference type="InterPro" id="IPR020900">
    <property type="entry name" value="Arg_repress_DNA-bd"/>
</dbReference>
<dbReference type="InterPro" id="IPR036388">
    <property type="entry name" value="WH-like_DNA-bd_sf"/>
</dbReference>
<dbReference type="InterPro" id="IPR036390">
    <property type="entry name" value="WH_DNA-bd_sf"/>
</dbReference>
<dbReference type="NCBIfam" id="TIGR01529">
    <property type="entry name" value="argR_whole"/>
    <property type="match status" value="1"/>
</dbReference>
<dbReference type="NCBIfam" id="NF001680">
    <property type="entry name" value="PRK00441.1"/>
    <property type="match status" value="1"/>
</dbReference>
<dbReference type="PANTHER" id="PTHR34471">
    <property type="entry name" value="ARGININE REPRESSOR"/>
    <property type="match status" value="1"/>
</dbReference>
<dbReference type="PANTHER" id="PTHR34471:SF1">
    <property type="entry name" value="ARGININE REPRESSOR"/>
    <property type="match status" value="1"/>
</dbReference>
<dbReference type="Pfam" id="PF01316">
    <property type="entry name" value="Arg_repressor"/>
    <property type="match status" value="1"/>
</dbReference>
<dbReference type="Pfam" id="PF02863">
    <property type="entry name" value="Arg_repressor_C"/>
    <property type="match status" value="1"/>
</dbReference>
<dbReference type="PRINTS" id="PR01467">
    <property type="entry name" value="ARGREPRESSOR"/>
</dbReference>
<dbReference type="SUPFAM" id="SSF55252">
    <property type="entry name" value="C-terminal domain of arginine repressor"/>
    <property type="match status" value="1"/>
</dbReference>
<dbReference type="SUPFAM" id="SSF46785">
    <property type="entry name" value="Winged helix' DNA-binding domain"/>
    <property type="match status" value="1"/>
</dbReference>
<comment type="function">
    <text evidence="1">Regulates arginine biosynthesis genes.</text>
</comment>
<comment type="pathway">
    <text>Amino-acid biosynthesis; L-arginine biosynthesis [regulation].</text>
</comment>
<comment type="subcellular location">
    <subcellularLocation>
        <location evidence="1">Cytoplasm</location>
    </subcellularLocation>
</comment>
<comment type="similarity">
    <text evidence="1">Belongs to the ArgR family.</text>
</comment>
<name>ARGR_CLOB6</name>
<feature type="chain" id="PRO_1000203711" description="Arginine repressor">
    <location>
        <begin position="1"/>
        <end position="150"/>
    </location>
</feature>
<organism>
    <name type="scientific">Clostridium botulinum (strain 657 / Type Ba4)</name>
    <dbReference type="NCBI Taxonomy" id="515621"/>
    <lineage>
        <taxon>Bacteria</taxon>
        <taxon>Bacillati</taxon>
        <taxon>Bacillota</taxon>
        <taxon>Clostridia</taxon>
        <taxon>Eubacteriales</taxon>
        <taxon>Clostridiaceae</taxon>
        <taxon>Clostridium</taxon>
    </lineage>
</organism>
<reference key="1">
    <citation type="submission" date="2008-05" db="EMBL/GenBank/DDBJ databases">
        <title>Genome sequence of Clostridium botulinum Ba4 strain 657.</title>
        <authorList>
            <person name="Shrivastava S."/>
            <person name="Brown J.L."/>
            <person name="Bruce D."/>
            <person name="Detter C."/>
            <person name="Munk C."/>
            <person name="Smith L.A."/>
            <person name="Smith T.J."/>
            <person name="Sutton G."/>
            <person name="Brettin T.S."/>
        </authorList>
    </citation>
    <scope>NUCLEOTIDE SEQUENCE [LARGE SCALE GENOMIC DNA]</scope>
    <source>
        <strain>657 / Type Ba4</strain>
    </source>
</reference>
<evidence type="ECO:0000255" key="1">
    <source>
        <dbReference type="HAMAP-Rule" id="MF_00173"/>
    </source>
</evidence>
<gene>
    <name evidence="1" type="primary">argR</name>
    <name type="ordered locus">CLJ_B2065</name>
</gene>
<proteinExistence type="inferred from homology"/>
<protein>
    <recommendedName>
        <fullName evidence="1">Arginine repressor</fullName>
    </recommendedName>
</protein>
<keyword id="KW-0028">Amino-acid biosynthesis</keyword>
<keyword id="KW-0055">Arginine biosynthesis</keyword>
<keyword id="KW-0963">Cytoplasm</keyword>
<keyword id="KW-0238">DNA-binding</keyword>
<keyword id="KW-0678">Repressor</keyword>
<keyword id="KW-0804">Transcription</keyword>
<keyword id="KW-0805">Transcription regulation</keyword>
<accession>C3KXB9</accession>
<sequence length="150" mass="16413">MKVSRHAKILEIINSKDIDTQEELAEELKKMGMNVTQATVSRDIKELKLIKVLGNTGKYKYATINHTESYMSDKLISIFAQTVISVENIDKLIIIKTISGSAPGAGEAIDTLGFDGIAGTIAGDNTIFAMTRTNEKAQEITLKLKKIINA</sequence>